<accession>P32047</accession>
<accession>D6W1A5</accession>
<evidence type="ECO:0000256" key="1">
    <source>
        <dbReference type="SAM" id="MobiDB-lite"/>
    </source>
</evidence>
<evidence type="ECO:0000269" key="2">
    <source>
    </source>
</evidence>
<evidence type="ECO:0000305" key="3"/>
<evidence type="ECO:0007744" key="4">
    <source>
    </source>
</evidence>
<evidence type="ECO:0007744" key="5">
    <source>
    </source>
</evidence>
<evidence type="ECO:0007744" key="6">
    <source>
    </source>
</evidence>
<evidence type="ECO:0007744" key="7">
    <source>
    </source>
</evidence>
<protein>
    <recommendedName>
        <fullName>Protein MLF3</fullName>
    </recommendedName>
    <alternativeName>
        <fullName>Multicopy suppressor of leflunomide sensitivity 3</fullName>
    </alternativeName>
</protein>
<proteinExistence type="evidence at protein level"/>
<organism>
    <name type="scientific">Saccharomyces cerevisiae (strain ATCC 204508 / S288c)</name>
    <name type="common">Baker's yeast</name>
    <dbReference type="NCBI Taxonomy" id="559292"/>
    <lineage>
        <taxon>Eukaryota</taxon>
        <taxon>Fungi</taxon>
        <taxon>Dikarya</taxon>
        <taxon>Ascomycota</taxon>
        <taxon>Saccharomycotina</taxon>
        <taxon>Saccharomycetes</taxon>
        <taxon>Saccharomycetales</taxon>
        <taxon>Saccharomycetaceae</taxon>
        <taxon>Saccharomyces</taxon>
    </lineage>
</organism>
<gene>
    <name type="primary">MLF3</name>
    <name type="synonym">YMK1</name>
    <name type="ordered locus">YNL074C</name>
    <name type="ORF">N2359</name>
</gene>
<sequence>MCVYKSNSNNSNPSFIFERTVQEASSNDLFLQPPVSASNTSHSSRSNSFYNLQTISPIPISGSEVRTPSLRKNSNNVSSPLDNVIPTSRSASNSTTSSLAHQEYILNPICNMQNHHHRRRTLENSVAPALDASCSIVNDENTDLSDVDMVYSRRPSSAVSLNMALLARTNSATLPSSESSPASPDLKLSRSHSHSAATRPTLNNINNTGMTTTTSNGEPNSRILRFYSYVDMLNDEKLAQANNTPTSRPPMKSQAYSCPFILKRSPPQAYSSSSATTTFSNPFIKTTELPATSPYVSPQQSARQYSNNANNNAKSPKNRSSSILFQRQSILSNVDPVANMHKNPKFQIESSDSEEEDLTMDMLDPSFPLSSSLRSSANLASNPELATQTPLSTSSSYTAIGKPMPLSTDPSYVSSSNTLSSEHELRVEKVSEVLKKKVSNGGFSTEFNSCDT</sequence>
<comment type="subcellular location">
    <subcellularLocation>
        <location evidence="2">Cytoplasm</location>
    </subcellularLocation>
</comment>
<comment type="miscellaneous">
    <text>Disruption of the MLF3 gene causes increased sensitivity to the immunosuppressant leflunomide.</text>
</comment>
<comment type="similarity">
    <text evidence="3">To yeast VHS2.</text>
</comment>
<feature type="chain" id="PRO_0000096499" description="Protein MLF3">
    <location>
        <begin position="1"/>
        <end position="452"/>
    </location>
</feature>
<feature type="region of interest" description="Disordered" evidence="1">
    <location>
        <begin position="61"/>
        <end position="94"/>
    </location>
</feature>
<feature type="region of interest" description="Disordered" evidence="1">
    <location>
        <begin position="171"/>
        <end position="220"/>
    </location>
</feature>
<feature type="region of interest" description="Disordered" evidence="1">
    <location>
        <begin position="290"/>
        <end position="321"/>
    </location>
</feature>
<feature type="region of interest" description="Disordered" evidence="1">
    <location>
        <begin position="348"/>
        <end position="402"/>
    </location>
</feature>
<feature type="compositionally biased region" description="Polar residues" evidence="1">
    <location>
        <begin position="64"/>
        <end position="81"/>
    </location>
</feature>
<feature type="compositionally biased region" description="Polar residues" evidence="1">
    <location>
        <begin position="171"/>
        <end position="182"/>
    </location>
</feature>
<feature type="compositionally biased region" description="Low complexity" evidence="1">
    <location>
        <begin position="201"/>
        <end position="216"/>
    </location>
</feature>
<feature type="compositionally biased region" description="Low complexity" evidence="1">
    <location>
        <begin position="299"/>
        <end position="321"/>
    </location>
</feature>
<feature type="compositionally biased region" description="Low complexity" evidence="1">
    <location>
        <begin position="365"/>
        <end position="383"/>
    </location>
</feature>
<feature type="compositionally biased region" description="Polar residues" evidence="1">
    <location>
        <begin position="384"/>
        <end position="398"/>
    </location>
</feature>
<feature type="modified residue" description="Phosphoserine" evidence="4">
    <location>
        <position position="8"/>
    </location>
</feature>
<feature type="modified residue" description="Phosphoserine" evidence="6 7">
    <location>
        <position position="11"/>
    </location>
</feature>
<feature type="modified residue" description="Phosphoserine" evidence="6 7">
    <location>
        <position position="14"/>
    </location>
</feature>
<feature type="modified residue" description="Phosphoserine" evidence="6">
    <location>
        <position position="56"/>
    </location>
</feature>
<feature type="modified residue" description="Phosphoserine" evidence="6 7">
    <location>
        <position position="74"/>
    </location>
</feature>
<feature type="modified residue" description="Phosphoserine" evidence="7">
    <location>
        <position position="79"/>
    </location>
</feature>
<feature type="modified residue" description="Phosphothreonine" evidence="7">
    <location>
        <position position="121"/>
    </location>
</feature>
<feature type="modified residue" description="Phosphoserine" evidence="7">
    <location>
        <position position="145"/>
    </location>
</feature>
<feature type="modified residue" description="Phosphoserine" evidence="7">
    <location>
        <position position="156"/>
    </location>
</feature>
<feature type="modified residue" description="Phosphoserine" evidence="7">
    <location>
        <position position="160"/>
    </location>
</feature>
<feature type="modified residue" description="Phosphothreonine" evidence="7">
    <location>
        <position position="169"/>
    </location>
</feature>
<feature type="modified residue" description="Phosphoserine" evidence="4">
    <location>
        <position position="171"/>
    </location>
</feature>
<feature type="modified residue" description="Phosphothreonine" evidence="7">
    <location>
        <position position="173"/>
    </location>
</feature>
<feature type="modified residue" description="Phosphoserine" evidence="7">
    <location>
        <position position="183"/>
    </location>
</feature>
<feature type="modified residue" description="Phosphoserine" evidence="6 7">
    <location>
        <position position="189"/>
    </location>
</feature>
<feature type="modified residue" description="Phosphotyrosine" evidence="5 7">
    <location>
        <position position="227"/>
    </location>
</feature>
<feature type="modified residue" description="Phosphoserine" evidence="7">
    <location>
        <position position="228"/>
    </location>
</feature>
<feature type="modified residue" description="Phosphoserine" evidence="7">
    <location>
        <position position="257"/>
    </location>
</feature>
<feature type="modified residue" description="Phosphoserine" evidence="7">
    <location>
        <position position="265"/>
    </location>
</feature>
<feature type="modified residue" description="Phosphotyrosine" evidence="6 7">
    <location>
        <position position="295"/>
    </location>
</feature>
<feature type="modified residue" description="Phosphoserine" evidence="6 7">
    <location>
        <position position="297"/>
    </location>
</feature>
<feature type="modified residue" description="Phosphoserine" evidence="7">
    <location>
        <position position="320"/>
    </location>
</feature>
<feature type="modified residue" description="Phosphoserine" evidence="7">
    <location>
        <position position="353"/>
    </location>
</feature>
<feature type="modified residue" description="Phosphoserine" evidence="6 7">
    <location>
        <position position="439"/>
    </location>
</feature>
<dbReference type="EMBL" id="X86470">
    <property type="protein sequence ID" value="CAA60186.1"/>
    <property type="molecule type" value="Genomic_DNA"/>
</dbReference>
<dbReference type="EMBL" id="Z71350">
    <property type="protein sequence ID" value="CAA95948.1"/>
    <property type="molecule type" value="Genomic_DNA"/>
</dbReference>
<dbReference type="EMBL" id="AY692774">
    <property type="protein sequence ID" value="AAT92793.1"/>
    <property type="molecule type" value="Genomic_DNA"/>
</dbReference>
<dbReference type="EMBL" id="X57360">
    <property type="status" value="NOT_ANNOTATED_CDS"/>
    <property type="molecule type" value="Genomic_DNA"/>
</dbReference>
<dbReference type="EMBL" id="BK006947">
    <property type="protein sequence ID" value="DAA10471.1"/>
    <property type="molecule type" value="Genomic_DNA"/>
</dbReference>
<dbReference type="PIR" id="S53906">
    <property type="entry name" value="S53906"/>
</dbReference>
<dbReference type="RefSeq" id="NP_014325.3">
    <property type="nucleotide sequence ID" value="NM_001182912.3"/>
</dbReference>
<dbReference type="BioGRID" id="35749">
    <property type="interactions" value="75"/>
</dbReference>
<dbReference type="FunCoup" id="P32047">
    <property type="interactions" value="56"/>
</dbReference>
<dbReference type="IntAct" id="P32047">
    <property type="interactions" value="11"/>
</dbReference>
<dbReference type="MINT" id="P32047"/>
<dbReference type="STRING" id="4932.YNL074C"/>
<dbReference type="GlyGen" id="P32047">
    <property type="glycosylation" value="7 sites, 1 O-linked glycan (7 sites)"/>
</dbReference>
<dbReference type="iPTMnet" id="P32047"/>
<dbReference type="SwissPalm" id="P32047"/>
<dbReference type="PaxDb" id="4932-YNL074C"/>
<dbReference type="PeptideAtlas" id="P32047"/>
<dbReference type="TopDownProteomics" id="P32047"/>
<dbReference type="EnsemblFungi" id="YNL074C_mRNA">
    <property type="protein sequence ID" value="YNL074C"/>
    <property type="gene ID" value="YNL074C"/>
</dbReference>
<dbReference type="GeneID" id="855650"/>
<dbReference type="KEGG" id="sce:YNL074C"/>
<dbReference type="AGR" id="SGD:S000005018"/>
<dbReference type="SGD" id="S000005018">
    <property type="gene designation" value="MLF3"/>
</dbReference>
<dbReference type="VEuPathDB" id="FungiDB:YNL074C"/>
<dbReference type="eggNOG" id="ENOG502S4KQ">
    <property type="taxonomic scope" value="Eukaryota"/>
</dbReference>
<dbReference type="GeneTree" id="ENSGT00940000176806"/>
<dbReference type="HOGENOM" id="CLU_061868_0_0_1"/>
<dbReference type="InParanoid" id="P32047"/>
<dbReference type="OMA" id="NINNTGM"/>
<dbReference type="OrthoDB" id="5364312at2759"/>
<dbReference type="BioCyc" id="YEAST:G3O-33103-MONOMER"/>
<dbReference type="BioGRID-ORCS" id="855650">
    <property type="hits" value="3 hits in 10 CRISPR screens"/>
</dbReference>
<dbReference type="PRO" id="PR:P32047"/>
<dbReference type="Proteomes" id="UP000002311">
    <property type="component" value="Chromosome XIV"/>
</dbReference>
<dbReference type="RNAct" id="P32047">
    <property type="molecule type" value="protein"/>
</dbReference>
<dbReference type="GO" id="GO:0005737">
    <property type="term" value="C:cytoplasm"/>
    <property type="evidence" value="ECO:0000314"/>
    <property type="project" value="SGD"/>
</dbReference>
<dbReference type="GO" id="GO:0005829">
    <property type="term" value="C:cytosol"/>
    <property type="evidence" value="ECO:0007005"/>
    <property type="project" value="SGD"/>
</dbReference>
<dbReference type="GO" id="GO:0030950">
    <property type="term" value="P:establishment or maintenance of actin cytoskeleton polarity"/>
    <property type="evidence" value="ECO:0000316"/>
    <property type="project" value="SGD"/>
</dbReference>
<keyword id="KW-0963">Cytoplasm</keyword>
<keyword id="KW-0597">Phosphoprotein</keyword>
<keyword id="KW-1185">Reference proteome</keyword>
<name>MLF3_YEAST</name>
<reference key="1">
    <citation type="journal article" date="1996" name="Yeast">
        <title>Sequencing a cosmid clone of Saccharomyces cerevisiae chromosome XIV reveals 12 new open reading frames (ORFs) and an ancient duplication of six ORFs.</title>
        <authorList>
            <person name="Poehlmann R."/>
            <person name="Philippsen P."/>
        </authorList>
    </citation>
    <scope>NUCLEOTIDE SEQUENCE [GENOMIC DNA]</scope>
    <source>
        <strain>ATCC 96604 / S288c / FY1679</strain>
    </source>
</reference>
<reference key="2">
    <citation type="journal article" date="1997" name="Nature">
        <title>The nucleotide sequence of Saccharomyces cerevisiae chromosome XIV and its evolutionary implications.</title>
        <authorList>
            <person name="Philippsen P."/>
            <person name="Kleine K."/>
            <person name="Poehlmann R."/>
            <person name="Duesterhoeft A."/>
            <person name="Hamberg K."/>
            <person name="Hegemann J.H."/>
            <person name="Obermaier B."/>
            <person name="Urrestarazu L.A."/>
            <person name="Aert R."/>
            <person name="Albermann K."/>
            <person name="Altmann R."/>
            <person name="Andre B."/>
            <person name="Baladron V."/>
            <person name="Ballesta J.P.G."/>
            <person name="Becam A.-M."/>
            <person name="Beinhauer J.D."/>
            <person name="Boskovic J."/>
            <person name="Buitrago M.J."/>
            <person name="Bussereau F."/>
            <person name="Coster F."/>
            <person name="Crouzet M."/>
            <person name="D'Angelo M."/>
            <person name="Dal Pero F."/>
            <person name="De Antoni A."/>
            <person name="del Rey F."/>
            <person name="Doignon F."/>
            <person name="Domdey H."/>
            <person name="Dubois E."/>
            <person name="Fiedler T.A."/>
            <person name="Fleig U."/>
            <person name="Floeth M."/>
            <person name="Fritz C."/>
            <person name="Gaillardin C."/>
            <person name="Garcia-Cantalejo J.M."/>
            <person name="Glansdorff N."/>
            <person name="Goffeau A."/>
            <person name="Gueldener U."/>
            <person name="Herbert C.J."/>
            <person name="Heumann K."/>
            <person name="Heuss-Neitzel D."/>
            <person name="Hilbert H."/>
            <person name="Hinni K."/>
            <person name="Iraqui Houssaini I."/>
            <person name="Jacquet M."/>
            <person name="Jimenez A."/>
            <person name="Jonniaux J.-L."/>
            <person name="Karpfinger-Hartl L."/>
            <person name="Lanfranchi G."/>
            <person name="Lepingle A."/>
            <person name="Levesque H."/>
            <person name="Lyck R."/>
            <person name="Maftahi M."/>
            <person name="Mallet L."/>
            <person name="Maurer C.T.C."/>
            <person name="Messenguy F."/>
            <person name="Mewes H.-W."/>
            <person name="Moestl D."/>
            <person name="Nasr F."/>
            <person name="Nicaud J.-M."/>
            <person name="Niedenthal R.K."/>
            <person name="Pandolfo D."/>
            <person name="Pierard A."/>
            <person name="Piravandi E."/>
            <person name="Planta R.J."/>
            <person name="Pohl T.M."/>
            <person name="Purnelle B."/>
            <person name="Rebischung C."/>
            <person name="Remacha M.A."/>
            <person name="Revuelta J.L."/>
            <person name="Rinke M."/>
            <person name="Saiz J.E."/>
            <person name="Sartorello F."/>
            <person name="Scherens B."/>
            <person name="Sen-Gupta M."/>
            <person name="Soler-Mira A."/>
            <person name="Urbanus J.H.M."/>
            <person name="Valle G."/>
            <person name="Van Dyck L."/>
            <person name="Verhasselt P."/>
            <person name="Vierendeels F."/>
            <person name="Vissers S."/>
            <person name="Voet M."/>
            <person name="Volckaert G."/>
            <person name="Wach A."/>
            <person name="Wambutt R."/>
            <person name="Wedler H."/>
            <person name="Zollner A."/>
            <person name="Hani J."/>
        </authorList>
    </citation>
    <scope>NUCLEOTIDE SEQUENCE [LARGE SCALE GENOMIC DNA]</scope>
    <source>
        <strain>ATCC 204508 / S288c</strain>
    </source>
</reference>
<reference key="3">
    <citation type="journal article" date="2014" name="G3 (Bethesda)">
        <title>The reference genome sequence of Saccharomyces cerevisiae: Then and now.</title>
        <authorList>
            <person name="Engel S.R."/>
            <person name="Dietrich F.S."/>
            <person name="Fisk D.G."/>
            <person name="Binkley G."/>
            <person name="Balakrishnan R."/>
            <person name="Costanzo M.C."/>
            <person name="Dwight S.S."/>
            <person name="Hitz B.C."/>
            <person name="Karra K."/>
            <person name="Nash R.S."/>
            <person name="Weng S."/>
            <person name="Wong E.D."/>
            <person name="Lloyd P."/>
            <person name="Skrzypek M.S."/>
            <person name="Miyasato S.R."/>
            <person name="Simison M."/>
            <person name="Cherry J.M."/>
        </authorList>
    </citation>
    <scope>GENOME REANNOTATION</scope>
    <source>
        <strain>ATCC 204508 / S288c</strain>
    </source>
</reference>
<reference key="4">
    <citation type="journal article" date="2007" name="Genome Res.">
        <title>Approaching a complete repository of sequence-verified protein-encoding clones for Saccharomyces cerevisiae.</title>
        <authorList>
            <person name="Hu Y."/>
            <person name="Rolfs A."/>
            <person name="Bhullar B."/>
            <person name="Murthy T.V.S."/>
            <person name="Zhu C."/>
            <person name="Berger M.F."/>
            <person name="Camargo A.A."/>
            <person name="Kelley F."/>
            <person name="McCarron S."/>
            <person name="Jepson D."/>
            <person name="Richardson A."/>
            <person name="Raphael J."/>
            <person name="Moreira D."/>
            <person name="Taycher E."/>
            <person name="Zuo D."/>
            <person name="Mohr S."/>
            <person name="Kane M.F."/>
            <person name="Williamson J."/>
            <person name="Simpson A.J.G."/>
            <person name="Bulyk M.L."/>
            <person name="Harlow E."/>
            <person name="Marsischky G."/>
            <person name="Kolodner R.D."/>
            <person name="LaBaer J."/>
        </authorList>
    </citation>
    <scope>NUCLEOTIDE SEQUENCE [GENOMIC DNA]</scope>
    <source>
        <strain>ATCC 204508 / S288c</strain>
    </source>
</reference>
<reference key="5">
    <citation type="journal article" date="1991" name="J. Mol. Biol.">
        <title>Structure and evolution of a group of related aminoacyl-tRNA synthetases.</title>
        <authorList>
            <person name="Gatti D."/>
            <person name="Tzagoloff A."/>
        </authorList>
    </citation>
    <scope>NUCLEOTIDE SEQUENCE [GENOMIC DNA] OF 1-217</scope>
</reference>
<reference key="6">
    <citation type="journal article" date="1998" name="Biochim. Biophys. Acta">
        <title>Saccharomyces cerevisiae MLF3/YNL074C gene, encoding a serine-rich protein of unknown function, determines the level of resistance to the novel immunosuppressive drug leflunomide.</title>
        <authorList>
            <person name="Fujimura H.A."/>
        </authorList>
    </citation>
    <scope>INVOLVEMENT IN LEFLUNOMIDE RESISTANCE</scope>
</reference>
<reference key="7">
    <citation type="journal article" date="2003" name="Nature">
        <title>Global analysis of protein localization in budding yeast.</title>
        <authorList>
            <person name="Huh W.-K."/>
            <person name="Falvo J.V."/>
            <person name="Gerke L.C."/>
            <person name="Carroll A.S."/>
            <person name="Howson R.W."/>
            <person name="Weissman J.S."/>
            <person name="O'Shea E.K."/>
        </authorList>
    </citation>
    <scope>SUBCELLULAR LOCATION [LARGE SCALE ANALYSIS]</scope>
</reference>
<reference key="8">
    <citation type="journal article" date="2005" name="Mol. Cell. Proteomics">
        <title>Quantitative phosphoproteomics applied to the yeast pheromone signaling pathway.</title>
        <authorList>
            <person name="Gruhler A."/>
            <person name="Olsen J.V."/>
            <person name="Mohammed S."/>
            <person name="Mortensen P."/>
            <person name="Faergeman N.J."/>
            <person name="Mann M."/>
            <person name="Jensen O.N."/>
        </authorList>
    </citation>
    <scope>PHOSPHORYLATION [LARGE SCALE ANALYSIS] AT SER-8 AND SER-171</scope>
    <scope>IDENTIFICATION BY MASS SPECTROMETRY [LARGE SCALE ANALYSIS]</scope>
    <source>
        <strain>YAL6B</strain>
    </source>
</reference>
<reference key="9">
    <citation type="journal article" date="2007" name="J. Proteome Res.">
        <title>Large-scale phosphorylation analysis of alpha-factor-arrested Saccharomyces cerevisiae.</title>
        <authorList>
            <person name="Li X."/>
            <person name="Gerber S.A."/>
            <person name="Rudner A.D."/>
            <person name="Beausoleil S.A."/>
            <person name="Haas W."/>
            <person name="Villen J."/>
            <person name="Elias J.E."/>
            <person name="Gygi S.P."/>
        </authorList>
    </citation>
    <scope>PHOSPHORYLATION [LARGE SCALE ANALYSIS] AT TYR-227</scope>
    <scope>IDENTIFICATION BY MASS SPECTROMETRY [LARGE SCALE ANALYSIS]</scope>
    <source>
        <strain>ADR376</strain>
    </source>
</reference>
<reference key="10">
    <citation type="journal article" date="2007" name="Proc. Natl. Acad. Sci. U.S.A.">
        <title>Analysis of phosphorylation sites on proteins from Saccharomyces cerevisiae by electron transfer dissociation (ETD) mass spectrometry.</title>
        <authorList>
            <person name="Chi A."/>
            <person name="Huttenhower C."/>
            <person name="Geer L.Y."/>
            <person name="Coon J.J."/>
            <person name="Syka J.E.P."/>
            <person name="Bai D.L."/>
            <person name="Shabanowitz J."/>
            <person name="Burke D.J."/>
            <person name="Troyanskaya O.G."/>
            <person name="Hunt D.F."/>
        </authorList>
    </citation>
    <scope>IDENTIFICATION BY MASS SPECTROMETRY [LARGE SCALE ANALYSIS]</scope>
</reference>
<reference key="11">
    <citation type="journal article" date="2008" name="Mol. Cell. Proteomics">
        <title>A multidimensional chromatography technology for in-depth phosphoproteome analysis.</title>
        <authorList>
            <person name="Albuquerque C.P."/>
            <person name="Smolka M.B."/>
            <person name="Payne S.H."/>
            <person name="Bafna V."/>
            <person name="Eng J."/>
            <person name="Zhou H."/>
        </authorList>
    </citation>
    <scope>PHOSPHORYLATION [LARGE SCALE ANALYSIS] AT SER-11; SER-14; SER-56; SER-74; SER-189; TYR-295; SER-297 AND SER-439</scope>
    <scope>IDENTIFICATION BY MASS SPECTROMETRY [LARGE SCALE ANALYSIS]</scope>
</reference>
<reference key="12">
    <citation type="journal article" date="2009" name="Science">
        <title>Global analysis of Cdk1 substrate phosphorylation sites provides insights into evolution.</title>
        <authorList>
            <person name="Holt L.J."/>
            <person name="Tuch B.B."/>
            <person name="Villen J."/>
            <person name="Johnson A.D."/>
            <person name="Gygi S.P."/>
            <person name="Morgan D.O."/>
        </authorList>
    </citation>
    <scope>PHOSPHORYLATION [LARGE SCALE ANALYSIS] AT SER-11; SER-14; SER-74; SER-79; THR-121; SER-145; SER-156; SER-160; THR-169; THR-173; SER-183; SER-189; TYR-227; SER-228; SER-257; SER-265; TYR-295; SER-297; SER-320; SER-353 AND SER-439</scope>
    <scope>IDENTIFICATION BY MASS SPECTROMETRY [LARGE SCALE ANALYSIS]</scope>
</reference>